<organism>
    <name type="scientific">Caldicellulosiruptor saccharolyticus (strain ATCC 43494 / DSM 8903 / Tp8T 6331)</name>
    <dbReference type="NCBI Taxonomy" id="351627"/>
    <lineage>
        <taxon>Bacteria</taxon>
        <taxon>Bacillati</taxon>
        <taxon>Bacillota</taxon>
        <taxon>Bacillota incertae sedis</taxon>
        <taxon>Caldicellulosiruptorales</taxon>
        <taxon>Caldicellulosiruptoraceae</taxon>
        <taxon>Caldicellulosiruptor</taxon>
    </lineage>
</organism>
<dbReference type="EC" id="1.3.1.14"/>
<dbReference type="EMBL" id="CP000679">
    <property type="protein sequence ID" value="ABP67521.1"/>
    <property type="molecule type" value="Genomic_DNA"/>
</dbReference>
<dbReference type="RefSeq" id="WP_011917457.1">
    <property type="nucleotide sequence ID" value="NC_009437.1"/>
</dbReference>
<dbReference type="SMR" id="A4XKT6"/>
<dbReference type="STRING" id="351627.Csac_1936"/>
<dbReference type="KEGG" id="csc:Csac_1936"/>
<dbReference type="eggNOG" id="COG0167">
    <property type="taxonomic scope" value="Bacteria"/>
</dbReference>
<dbReference type="HOGENOM" id="CLU_042042_0_0_9"/>
<dbReference type="OrthoDB" id="9794954at2"/>
<dbReference type="UniPathway" id="UPA00070">
    <property type="reaction ID" value="UER00945"/>
</dbReference>
<dbReference type="Proteomes" id="UP000000256">
    <property type="component" value="Chromosome"/>
</dbReference>
<dbReference type="GO" id="GO:0005737">
    <property type="term" value="C:cytoplasm"/>
    <property type="evidence" value="ECO:0007669"/>
    <property type="project" value="UniProtKB-SubCell"/>
</dbReference>
<dbReference type="GO" id="GO:0004589">
    <property type="term" value="F:dihydroorotate dehydrogenase (NAD+) activity"/>
    <property type="evidence" value="ECO:0007669"/>
    <property type="project" value="UniProtKB-EC"/>
</dbReference>
<dbReference type="GO" id="GO:0006207">
    <property type="term" value="P:'de novo' pyrimidine nucleobase biosynthetic process"/>
    <property type="evidence" value="ECO:0007669"/>
    <property type="project" value="InterPro"/>
</dbReference>
<dbReference type="GO" id="GO:0044205">
    <property type="term" value="P:'de novo' UMP biosynthetic process"/>
    <property type="evidence" value="ECO:0007669"/>
    <property type="project" value="UniProtKB-UniRule"/>
</dbReference>
<dbReference type="CDD" id="cd04740">
    <property type="entry name" value="DHOD_1B_like"/>
    <property type="match status" value="1"/>
</dbReference>
<dbReference type="FunFam" id="3.20.20.70:FF:000027">
    <property type="entry name" value="Dihydropyrimidine dehydrogenase [NADP(+)]"/>
    <property type="match status" value="1"/>
</dbReference>
<dbReference type="Gene3D" id="3.20.20.70">
    <property type="entry name" value="Aldolase class I"/>
    <property type="match status" value="1"/>
</dbReference>
<dbReference type="HAMAP" id="MF_00224">
    <property type="entry name" value="DHO_dh_type1"/>
    <property type="match status" value="1"/>
</dbReference>
<dbReference type="InterPro" id="IPR013785">
    <property type="entry name" value="Aldolase_TIM"/>
</dbReference>
<dbReference type="InterPro" id="IPR050074">
    <property type="entry name" value="DHO_dehydrogenase"/>
</dbReference>
<dbReference type="InterPro" id="IPR033888">
    <property type="entry name" value="DHOD_1B"/>
</dbReference>
<dbReference type="InterPro" id="IPR024920">
    <property type="entry name" value="Dihydroorotate_DH_1"/>
</dbReference>
<dbReference type="InterPro" id="IPR012135">
    <property type="entry name" value="Dihydroorotate_DH_1_2"/>
</dbReference>
<dbReference type="InterPro" id="IPR005720">
    <property type="entry name" value="Dihydroorotate_DH_cat"/>
</dbReference>
<dbReference type="InterPro" id="IPR001295">
    <property type="entry name" value="Dihydroorotate_DH_CS"/>
</dbReference>
<dbReference type="InterPro" id="IPR049622">
    <property type="entry name" value="Dihydroorotate_DH_I"/>
</dbReference>
<dbReference type="NCBIfam" id="NF005574">
    <property type="entry name" value="PRK07259.1"/>
    <property type="match status" value="1"/>
</dbReference>
<dbReference type="NCBIfam" id="TIGR01037">
    <property type="entry name" value="pyrD_sub1_fam"/>
    <property type="match status" value="1"/>
</dbReference>
<dbReference type="PANTHER" id="PTHR48109:SF1">
    <property type="entry name" value="DIHYDROOROTATE DEHYDROGENASE (FUMARATE)"/>
    <property type="match status" value="1"/>
</dbReference>
<dbReference type="PANTHER" id="PTHR48109">
    <property type="entry name" value="DIHYDROOROTATE DEHYDROGENASE (QUINONE), MITOCHONDRIAL-RELATED"/>
    <property type="match status" value="1"/>
</dbReference>
<dbReference type="Pfam" id="PF01180">
    <property type="entry name" value="DHO_dh"/>
    <property type="match status" value="1"/>
</dbReference>
<dbReference type="PIRSF" id="PIRSF000164">
    <property type="entry name" value="DHO_oxidase"/>
    <property type="match status" value="1"/>
</dbReference>
<dbReference type="SUPFAM" id="SSF51395">
    <property type="entry name" value="FMN-linked oxidoreductases"/>
    <property type="match status" value="1"/>
</dbReference>
<dbReference type="PROSITE" id="PS00911">
    <property type="entry name" value="DHODEHASE_1"/>
    <property type="match status" value="1"/>
</dbReference>
<dbReference type="PROSITE" id="PS00912">
    <property type="entry name" value="DHODEHASE_2"/>
    <property type="match status" value="1"/>
</dbReference>
<sequence length="300" mass="32319">MNLEVEIAGVKLKNPVIAASGTFGFGREYSKLIDISEFGAICTKGITLKKRNGNPQPRLCEVYGGIINSVGLENPGVEAFVNEELPFLKGFNTKIIANINGFTKEEFVELTKVLSSLVDMIEVNLSCPNVKEGGMVFGKDPEKVYEITKSVKDVASCPIIVKLTPNVTDIAQLAIAAEKAGADAISLINTVSAMAIDIETRKPLIKMVTGGLSGPAIKPIAVRMVYECFKKVRIPIVGMGGIMNYKDAIEFFIAGATAIQIGTVNFINPKAVCEIKEGIEAYLERKGFNSIKELVGNINI</sequence>
<comment type="function">
    <text evidence="1">Catalyzes the conversion of dihydroorotate to orotate with NAD(+) as electron acceptor.</text>
</comment>
<comment type="catalytic activity">
    <reaction>
        <text>(S)-dihydroorotate + NAD(+) = orotate + NADH + H(+)</text>
        <dbReference type="Rhea" id="RHEA:13513"/>
        <dbReference type="ChEBI" id="CHEBI:15378"/>
        <dbReference type="ChEBI" id="CHEBI:30839"/>
        <dbReference type="ChEBI" id="CHEBI:30864"/>
        <dbReference type="ChEBI" id="CHEBI:57540"/>
        <dbReference type="ChEBI" id="CHEBI:57945"/>
        <dbReference type="EC" id="1.3.1.14"/>
    </reaction>
</comment>
<comment type="cofactor">
    <cofactor evidence="1">
        <name>FMN</name>
        <dbReference type="ChEBI" id="CHEBI:58210"/>
    </cofactor>
    <text evidence="1">Binds 1 FMN per subunit.</text>
</comment>
<comment type="pathway">
    <text>Pyrimidine metabolism; UMP biosynthesis via de novo pathway; orotate from (S)-dihydroorotate (NAD(+) route): step 1/1.</text>
</comment>
<comment type="subunit">
    <text evidence="1">Heterotetramer of 2 PyrK and 2 PyrD type B subunits.</text>
</comment>
<comment type="subcellular location">
    <subcellularLocation>
        <location evidence="1">Cytoplasm</location>
    </subcellularLocation>
</comment>
<comment type="similarity">
    <text evidence="2">Belongs to the dihydroorotate dehydrogenase family. Type 1 subfamily.</text>
</comment>
<protein>
    <recommendedName>
        <fullName>Dihydroorotate dehydrogenase B (NAD(+)), catalytic subunit</fullName>
        <shortName>DHOD B</shortName>
        <shortName>DHODase B</shortName>
        <shortName>DHOdehase B</shortName>
        <ecNumber>1.3.1.14</ecNumber>
    </recommendedName>
    <alternativeName>
        <fullName>Dihydroorotate oxidase B</fullName>
    </alternativeName>
    <alternativeName>
        <fullName>Orotate reductase (NADH)</fullName>
    </alternativeName>
</protein>
<gene>
    <name type="primary">pyrD</name>
    <name type="ordered locus">Csac_1936</name>
</gene>
<feature type="chain" id="PRO_1000100218" description="Dihydroorotate dehydrogenase B (NAD(+)), catalytic subunit">
    <location>
        <begin position="1"/>
        <end position="300"/>
    </location>
</feature>
<feature type="active site" description="Nucleophile">
    <location>
        <position position="127"/>
    </location>
</feature>
<feature type="binding site" evidence="1">
    <location>
        <position position="20"/>
    </location>
    <ligand>
        <name>FMN</name>
        <dbReference type="ChEBI" id="CHEBI:58210"/>
    </ligand>
</feature>
<feature type="binding site" evidence="1">
    <location>
        <begin position="44"/>
        <end position="45"/>
    </location>
    <ligand>
        <name>FMN</name>
        <dbReference type="ChEBI" id="CHEBI:58210"/>
    </ligand>
</feature>
<feature type="binding site" evidence="1">
    <location>
        <position position="44"/>
    </location>
    <ligand>
        <name>substrate</name>
    </ligand>
</feature>
<feature type="binding site" evidence="1">
    <location>
        <begin position="68"/>
        <end position="72"/>
    </location>
    <ligand>
        <name>substrate</name>
    </ligand>
</feature>
<feature type="binding site" evidence="1">
    <location>
        <position position="98"/>
    </location>
    <ligand>
        <name>FMN</name>
        <dbReference type="ChEBI" id="CHEBI:58210"/>
    </ligand>
</feature>
<feature type="binding site" evidence="1">
    <location>
        <position position="124"/>
    </location>
    <ligand>
        <name>FMN</name>
        <dbReference type="ChEBI" id="CHEBI:58210"/>
    </ligand>
</feature>
<feature type="binding site" evidence="1">
    <location>
        <position position="124"/>
    </location>
    <ligand>
        <name>substrate</name>
    </ligand>
</feature>
<feature type="binding site" evidence="1">
    <location>
        <position position="162"/>
    </location>
    <ligand>
        <name>FMN</name>
        <dbReference type="ChEBI" id="CHEBI:58210"/>
    </ligand>
</feature>
<feature type="binding site" evidence="1">
    <location>
        <position position="188"/>
    </location>
    <ligand>
        <name>FMN</name>
        <dbReference type="ChEBI" id="CHEBI:58210"/>
    </ligand>
</feature>
<feature type="binding site" evidence="1">
    <location>
        <begin position="189"/>
        <end position="190"/>
    </location>
    <ligand>
        <name>substrate</name>
    </ligand>
</feature>
<feature type="binding site" evidence="1">
    <location>
        <position position="214"/>
    </location>
    <ligand>
        <name>FMN</name>
        <dbReference type="ChEBI" id="CHEBI:58210"/>
    </ligand>
</feature>
<feature type="binding site" evidence="1">
    <location>
        <begin position="240"/>
        <end position="241"/>
    </location>
    <ligand>
        <name>FMN</name>
        <dbReference type="ChEBI" id="CHEBI:58210"/>
    </ligand>
</feature>
<feature type="binding site" evidence="1">
    <location>
        <begin position="262"/>
        <end position="263"/>
    </location>
    <ligand>
        <name>FMN</name>
        <dbReference type="ChEBI" id="CHEBI:58210"/>
    </ligand>
</feature>
<evidence type="ECO:0000250" key="1"/>
<evidence type="ECO:0000305" key="2"/>
<proteinExistence type="inferred from homology"/>
<keyword id="KW-0963">Cytoplasm</keyword>
<keyword id="KW-0285">Flavoprotein</keyword>
<keyword id="KW-0288">FMN</keyword>
<keyword id="KW-0520">NAD</keyword>
<keyword id="KW-0560">Oxidoreductase</keyword>
<keyword id="KW-0665">Pyrimidine biosynthesis</keyword>
<name>PYRDB_CALS8</name>
<reference key="1">
    <citation type="submission" date="2007-04" db="EMBL/GenBank/DDBJ databases">
        <title>Genome sequence of the thermophilic hydrogen-producing bacterium Caldicellulosiruptor saccharolyticus DSM 8903.</title>
        <authorList>
            <person name="Copeland A."/>
            <person name="Lucas S."/>
            <person name="Lapidus A."/>
            <person name="Barry K."/>
            <person name="Detter J.C."/>
            <person name="Glavina del Rio T."/>
            <person name="Hammon N."/>
            <person name="Israni S."/>
            <person name="Dalin E."/>
            <person name="Tice H."/>
            <person name="Pitluck S."/>
            <person name="Kiss H."/>
            <person name="Brettin T."/>
            <person name="Bruce D."/>
            <person name="Han C."/>
            <person name="Schmutz J."/>
            <person name="Larimer F."/>
            <person name="Land M."/>
            <person name="Hauser L."/>
            <person name="Kyrpides N."/>
            <person name="Lykidis A."/>
            <person name="van de Werken H.J.G."/>
            <person name="Verhaart M.R.A."/>
            <person name="VanFossen A.L."/>
            <person name="Lewis D.L."/>
            <person name="Nichols J.D."/>
            <person name="Goorissen H.P."/>
            <person name="van Niel E.W.J."/>
            <person name="Stams F.J.M."/>
            <person name="Willquist K.U."/>
            <person name="Ward D.E."/>
            <person name="van der Oost J."/>
            <person name="Kelly R.M."/>
            <person name="Kengen S.M.W."/>
            <person name="Richardson P."/>
        </authorList>
    </citation>
    <scope>NUCLEOTIDE SEQUENCE [LARGE SCALE GENOMIC DNA]</scope>
    <source>
        <strain>ATCC 43494 / DSM 8903 / Tp8T 6331</strain>
    </source>
</reference>
<accession>A4XKT6</accession>